<comment type="function">
    <text evidence="1">Part of a sulfur-relay system required for 2-thiolation of 5-methylaminomethyl-2-thiouridine (mnm(5)s(2)U) at tRNA wobble positions.</text>
</comment>
<comment type="subunit">
    <text evidence="1">Heterohexamer, formed by a dimer of trimers. The hexameric TusBCD complex contains 2 copies each of TusB, TusC and TusD. The TusBCD complex interacts with TusE.</text>
</comment>
<comment type="subcellular location">
    <subcellularLocation>
        <location evidence="1">Cytoplasm</location>
    </subcellularLocation>
</comment>
<comment type="similarity">
    <text evidence="1">Belongs to the DsrF/TusC family.</text>
</comment>
<keyword id="KW-0963">Cytoplasm</keyword>
<keyword id="KW-0819">tRNA processing</keyword>
<feature type="chain" id="PRO_0000234454" description="Protein TusC">
    <location>
        <begin position="1"/>
        <end position="118"/>
    </location>
</feature>
<gene>
    <name evidence="1" type="primary">tusC</name>
    <name type="ordered locus">SCH_3384</name>
</gene>
<dbReference type="EMBL" id="AE017220">
    <property type="protein sequence ID" value="AAX67290.1"/>
    <property type="molecule type" value="Genomic_DNA"/>
</dbReference>
<dbReference type="RefSeq" id="WP_000820705.1">
    <property type="nucleotide sequence ID" value="NC_006905.1"/>
</dbReference>
<dbReference type="SMR" id="Q57J22"/>
<dbReference type="GeneID" id="66757785"/>
<dbReference type="KEGG" id="sec:SCH_3384"/>
<dbReference type="HOGENOM" id="CLU_155943_1_0_6"/>
<dbReference type="Proteomes" id="UP000000538">
    <property type="component" value="Chromosome"/>
</dbReference>
<dbReference type="GO" id="GO:0005737">
    <property type="term" value="C:cytoplasm"/>
    <property type="evidence" value="ECO:0007669"/>
    <property type="project" value="UniProtKB-SubCell"/>
</dbReference>
<dbReference type="GO" id="GO:0008033">
    <property type="term" value="P:tRNA processing"/>
    <property type="evidence" value="ECO:0007669"/>
    <property type="project" value="UniProtKB-UniRule"/>
</dbReference>
<dbReference type="Gene3D" id="3.40.1260.10">
    <property type="entry name" value="DsrEFH-like"/>
    <property type="match status" value="1"/>
</dbReference>
<dbReference type="HAMAP" id="MF_00389">
    <property type="entry name" value="Thiourid_synth_C"/>
    <property type="match status" value="1"/>
</dbReference>
<dbReference type="InterPro" id="IPR027396">
    <property type="entry name" value="DsrEFH-like"/>
</dbReference>
<dbReference type="InterPro" id="IPR003787">
    <property type="entry name" value="Sulphur_relay_DsrE/F-like"/>
</dbReference>
<dbReference type="InterPro" id="IPR037450">
    <property type="entry name" value="Sulphur_relay_TusC"/>
</dbReference>
<dbReference type="InterPro" id="IPR017462">
    <property type="entry name" value="Sulphur_relay_TusC/DsrF"/>
</dbReference>
<dbReference type="NCBIfam" id="NF001238">
    <property type="entry name" value="PRK00211.1"/>
    <property type="match status" value="1"/>
</dbReference>
<dbReference type="NCBIfam" id="TIGR03010">
    <property type="entry name" value="sulf_tusC_dsrF"/>
    <property type="match status" value="1"/>
</dbReference>
<dbReference type="PANTHER" id="PTHR38780">
    <property type="entry name" value="PROTEIN TUSC"/>
    <property type="match status" value="1"/>
</dbReference>
<dbReference type="PANTHER" id="PTHR38780:SF1">
    <property type="entry name" value="PROTEIN TUSC"/>
    <property type="match status" value="1"/>
</dbReference>
<dbReference type="Pfam" id="PF02635">
    <property type="entry name" value="DsrE"/>
    <property type="match status" value="1"/>
</dbReference>
<dbReference type="SUPFAM" id="SSF75169">
    <property type="entry name" value="DsrEFH-like"/>
    <property type="match status" value="1"/>
</dbReference>
<accession>Q57J22</accession>
<proteinExistence type="inferred from homology"/>
<protein>
    <recommendedName>
        <fullName evidence="1">Protein TusC</fullName>
    </recommendedName>
    <alternativeName>
        <fullName evidence="1">tRNA 2-thiouridine synthesizing protein C</fullName>
    </alternativeName>
</protein>
<name>TUSC_SALCH</name>
<evidence type="ECO:0000255" key="1">
    <source>
        <dbReference type="HAMAP-Rule" id="MF_00389"/>
    </source>
</evidence>
<organism>
    <name type="scientific">Salmonella choleraesuis (strain SC-B67)</name>
    <dbReference type="NCBI Taxonomy" id="321314"/>
    <lineage>
        <taxon>Bacteria</taxon>
        <taxon>Pseudomonadati</taxon>
        <taxon>Pseudomonadota</taxon>
        <taxon>Gammaproteobacteria</taxon>
        <taxon>Enterobacterales</taxon>
        <taxon>Enterobacteriaceae</taxon>
        <taxon>Salmonella</taxon>
    </lineage>
</organism>
<sequence>MKRIAFVFSTAPHGSASGREGLDALLATSALTEALGVFFISDGVFQLLPGQKPDAVLARDYIATFKLFDLYDIDQCWICAASLRERGLENVNFVVDATPLEPVALRRELGNYDVILRF</sequence>
<reference key="1">
    <citation type="journal article" date="2005" name="Nucleic Acids Res.">
        <title>The genome sequence of Salmonella enterica serovar Choleraesuis, a highly invasive and resistant zoonotic pathogen.</title>
        <authorList>
            <person name="Chiu C.-H."/>
            <person name="Tang P."/>
            <person name="Chu C."/>
            <person name="Hu S."/>
            <person name="Bao Q."/>
            <person name="Yu J."/>
            <person name="Chou Y.-Y."/>
            <person name="Wang H.-S."/>
            <person name="Lee Y.-S."/>
        </authorList>
    </citation>
    <scope>NUCLEOTIDE SEQUENCE [LARGE SCALE GENOMIC DNA]</scope>
    <source>
        <strain>SC-B67</strain>
    </source>
</reference>